<dbReference type="EMBL" id="Z97335">
    <property type="protein sequence ID" value="CAB10206.1"/>
    <property type="status" value="ALT_SEQ"/>
    <property type="molecule type" value="Genomic_DNA"/>
</dbReference>
<dbReference type="EMBL" id="AL161538">
    <property type="protein sequence ID" value="CAB78469.1"/>
    <property type="status" value="ALT_SEQ"/>
    <property type="molecule type" value="Genomic_DNA"/>
</dbReference>
<dbReference type="EMBL" id="CP002687">
    <property type="protein sequence ID" value="AEE83407.2"/>
    <property type="molecule type" value="Genomic_DNA"/>
</dbReference>
<dbReference type="PIR" id="D71404">
    <property type="entry name" value="D71404"/>
</dbReference>
<dbReference type="RefSeq" id="NP_001031635.5">
    <property type="nucleotide sequence ID" value="NM_001036558.6"/>
</dbReference>
<dbReference type="PaxDb" id="3702-AT4G14272.1"/>
<dbReference type="EnsemblPlants" id="AT4G14272.1">
    <property type="protein sequence ID" value="AT4G14272.1"/>
    <property type="gene ID" value="AT4G14272"/>
</dbReference>
<dbReference type="GeneID" id="3769851"/>
<dbReference type="Gramene" id="AT4G14272.1">
    <property type="protein sequence ID" value="AT4G14272.1"/>
    <property type="gene ID" value="AT4G14272"/>
</dbReference>
<dbReference type="KEGG" id="ath:AT4G14272"/>
<dbReference type="Araport" id="AT4G14272"/>
<dbReference type="TAIR" id="AT4G14272"/>
<dbReference type="HOGENOM" id="CLU_185732_0_0_1"/>
<dbReference type="InParanoid" id="P0CAY0"/>
<dbReference type="PhylomeDB" id="P0CAY0"/>
<dbReference type="Proteomes" id="UP000006548">
    <property type="component" value="Chromosome 4"/>
</dbReference>
<dbReference type="GO" id="GO:0005576">
    <property type="term" value="C:extracellular region"/>
    <property type="evidence" value="ECO:0007669"/>
    <property type="project" value="UniProtKB-SubCell"/>
</dbReference>
<dbReference type="GO" id="GO:0050832">
    <property type="term" value="P:defense response to fungus"/>
    <property type="evidence" value="ECO:0007669"/>
    <property type="project" value="UniProtKB-KW"/>
</dbReference>
<dbReference type="GO" id="GO:0031640">
    <property type="term" value="P:killing of cells of another organism"/>
    <property type="evidence" value="ECO:0007669"/>
    <property type="project" value="UniProtKB-KW"/>
</dbReference>
<dbReference type="InterPro" id="IPR022618">
    <property type="entry name" value="Defensin-like_20-28"/>
</dbReference>
<dbReference type="PANTHER" id="PTHR34453">
    <property type="entry name" value="DEFENSIN-LIKE (DEFL) FAMILY PROTEIN-RELATED"/>
    <property type="match status" value="1"/>
</dbReference>
<dbReference type="PANTHER" id="PTHR34453:SF3">
    <property type="entry name" value="DEFENSIN-LIKE (DEFL) FAMILY PROTEIN-RELATED"/>
    <property type="match status" value="1"/>
</dbReference>
<keyword id="KW-0929">Antimicrobial</keyword>
<keyword id="KW-0295">Fungicide</keyword>
<keyword id="KW-0611">Plant defense</keyword>
<keyword id="KW-1185">Reference proteome</keyword>
<keyword id="KW-0964">Secreted</keyword>
<keyword id="KW-0732">Signal</keyword>
<protein>
    <recommendedName>
        <fullName>Putative defensin-like protein 28</fullName>
    </recommendedName>
</protein>
<evidence type="ECO:0000250" key="1"/>
<evidence type="ECO:0000255" key="2"/>
<evidence type="ECO:0000305" key="3"/>
<comment type="subcellular location">
    <subcellularLocation>
        <location evidence="1">Secreted</location>
    </subcellularLocation>
</comment>
<comment type="similarity">
    <text evidence="3">Belongs to the DEFL family.</text>
</comment>
<comment type="caution">
    <text evidence="3">Could be the product of a pseudogene. Lacks the 4 disulfide bonds, which are conserved features of the family.</text>
</comment>
<comment type="sequence caution" evidence="3">
    <conflict type="erroneous gene model prediction">
        <sequence resource="EMBL-CDS" id="CAB10206"/>
    </conflict>
    <text>The predicted gene has been split into 3 genes: At4g14270, At4g14272 and At4g14276.</text>
</comment>
<comment type="sequence caution" evidence="3">
    <conflict type="erroneous gene model prediction">
        <sequence resource="EMBL-CDS" id="CAB78469"/>
    </conflict>
    <text>The predicted gene has been split into 3 genes: At4g14270, At4g14272 and At4g14276.</text>
</comment>
<gene>
    <name type="ordered locus">At4g14272</name>
    <name type="ORF">dl3175w</name>
</gene>
<proteinExistence type="uncertain"/>
<accession>P0CAY0</accession>
<accession>F4JUP3</accession>
<accession>O23285</accession>
<reference key="1">
    <citation type="journal article" date="1998" name="Nature">
        <title>Analysis of 1.9 Mb of contiguous sequence from chromosome 4 of Arabidopsis thaliana.</title>
        <authorList>
            <person name="Bevan M."/>
            <person name="Bancroft I."/>
            <person name="Bent E."/>
            <person name="Love K."/>
            <person name="Goodman H.M."/>
            <person name="Dean C."/>
            <person name="Bergkamp R."/>
            <person name="Dirkse W."/>
            <person name="van Staveren M."/>
            <person name="Stiekema W."/>
            <person name="Drost L."/>
            <person name="Ridley P."/>
            <person name="Hudson S.-A."/>
            <person name="Patel K."/>
            <person name="Murphy G."/>
            <person name="Piffanelli P."/>
            <person name="Wedler H."/>
            <person name="Wedler E."/>
            <person name="Wambutt R."/>
            <person name="Weitzenegger T."/>
            <person name="Pohl T."/>
            <person name="Terryn N."/>
            <person name="Gielen J."/>
            <person name="Villarroel R."/>
            <person name="De Clercq R."/>
            <person name="van Montagu M."/>
            <person name="Lecharny A."/>
            <person name="Aubourg S."/>
            <person name="Gy I."/>
            <person name="Kreis M."/>
            <person name="Lao N."/>
            <person name="Kavanagh T."/>
            <person name="Hempel S."/>
            <person name="Kotter P."/>
            <person name="Entian K.-D."/>
            <person name="Rieger M."/>
            <person name="Schaefer M."/>
            <person name="Funk B."/>
            <person name="Mueller-Auer S."/>
            <person name="Silvey M."/>
            <person name="James R."/>
            <person name="Monfort A."/>
            <person name="Pons A."/>
            <person name="Puigdomenech P."/>
            <person name="Douka A."/>
            <person name="Voukelatou E."/>
            <person name="Milioni D."/>
            <person name="Hatzopoulos P."/>
            <person name="Piravandi E."/>
            <person name="Obermaier B."/>
            <person name="Hilbert H."/>
            <person name="Duesterhoeft A."/>
            <person name="Moores T."/>
            <person name="Jones J.D.G."/>
            <person name="Eneva T."/>
            <person name="Palme K."/>
            <person name="Benes V."/>
            <person name="Rechmann S."/>
            <person name="Ansorge W."/>
            <person name="Cooke R."/>
            <person name="Berger C."/>
            <person name="Delseny M."/>
            <person name="Voet M."/>
            <person name="Volckaert G."/>
            <person name="Mewes H.-W."/>
            <person name="Klosterman S."/>
            <person name="Schueller C."/>
            <person name="Chalwatzis N."/>
        </authorList>
    </citation>
    <scope>NUCLEOTIDE SEQUENCE [LARGE SCALE GENOMIC DNA]</scope>
    <source>
        <strain>cv. Columbia</strain>
    </source>
</reference>
<reference key="2">
    <citation type="journal article" date="1999" name="Nature">
        <title>Sequence and analysis of chromosome 4 of the plant Arabidopsis thaliana.</title>
        <authorList>
            <person name="Mayer K.F.X."/>
            <person name="Schueller C."/>
            <person name="Wambutt R."/>
            <person name="Murphy G."/>
            <person name="Volckaert G."/>
            <person name="Pohl T."/>
            <person name="Duesterhoeft A."/>
            <person name="Stiekema W."/>
            <person name="Entian K.-D."/>
            <person name="Terryn N."/>
            <person name="Harris B."/>
            <person name="Ansorge W."/>
            <person name="Brandt P."/>
            <person name="Grivell L.A."/>
            <person name="Rieger M."/>
            <person name="Weichselgartner M."/>
            <person name="de Simone V."/>
            <person name="Obermaier B."/>
            <person name="Mache R."/>
            <person name="Mueller M."/>
            <person name="Kreis M."/>
            <person name="Delseny M."/>
            <person name="Puigdomenech P."/>
            <person name="Watson M."/>
            <person name="Schmidtheini T."/>
            <person name="Reichert B."/>
            <person name="Portetelle D."/>
            <person name="Perez-Alonso M."/>
            <person name="Boutry M."/>
            <person name="Bancroft I."/>
            <person name="Vos P."/>
            <person name="Hoheisel J."/>
            <person name="Zimmermann W."/>
            <person name="Wedler H."/>
            <person name="Ridley P."/>
            <person name="Langham S.-A."/>
            <person name="McCullagh B."/>
            <person name="Bilham L."/>
            <person name="Robben J."/>
            <person name="van der Schueren J."/>
            <person name="Grymonprez B."/>
            <person name="Chuang Y.-J."/>
            <person name="Vandenbussche F."/>
            <person name="Braeken M."/>
            <person name="Weltjens I."/>
            <person name="Voet M."/>
            <person name="Bastiaens I."/>
            <person name="Aert R."/>
            <person name="Defoor E."/>
            <person name="Weitzenegger T."/>
            <person name="Bothe G."/>
            <person name="Ramsperger U."/>
            <person name="Hilbert H."/>
            <person name="Braun M."/>
            <person name="Holzer E."/>
            <person name="Brandt A."/>
            <person name="Peters S."/>
            <person name="van Staveren M."/>
            <person name="Dirkse W."/>
            <person name="Mooijman P."/>
            <person name="Klein Lankhorst R."/>
            <person name="Rose M."/>
            <person name="Hauf J."/>
            <person name="Koetter P."/>
            <person name="Berneiser S."/>
            <person name="Hempel S."/>
            <person name="Feldpausch M."/>
            <person name="Lamberth S."/>
            <person name="Van den Daele H."/>
            <person name="De Keyser A."/>
            <person name="Buysshaert C."/>
            <person name="Gielen J."/>
            <person name="Villarroel R."/>
            <person name="De Clercq R."/>
            <person name="van Montagu M."/>
            <person name="Rogers J."/>
            <person name="Cronin A."/>
            <person name="Quail M.A."/>
            <person name="Bray-Allen S."/>
            <person name="Clark L."/>
            <person name="Doggett J."/>
            <person name="Hall S."/>
            <person name="Kay M."/>
            <person name="Lennard N."/>
            <person name="McLay K."/>
            <person name="Mayes R."/>
            <person name="Pettett A."/>
            <person name="Rajandream M.A."/>
            <person name="Lyne M."/>
            <person name="Benes V."/>
            <person name="Rechmann S."/>
            <person name="Borkova D."/>
            <person name="Bloecker H."/>
            <person name="Scharfe M."/>
            <person name="Grimm M."/>
            <person name="Loehnert T.-H."/>
            <person name="Dose S."/>
            <person name="de Haan M."/>
            <person name="Maarse A.C."/>
            <person name="Schaefer M."/>
            <person name="Mueller-Auer S."/>
            <person name="Gabel C."/>
            <person name="Fuchs M."/>
            <person name="Fartmann B."/>
            <person name="Granderath K."/>
            <person name="Dauner D."/>
            <person name="Herzl A."/>
            <person name="Neumann S."/>
            <person name="Argiriou A."/>
            <person name="Vitale D."/>
            <person name="Liguori R."/>
            <person name="Piravandi E."/>
            <person name="Massenet O."/>
            <person name="Quigley F."/>
            <person name="Clabauld G."/>
            <person name="Muendlein A."/>
            <person name="Felber R."/>
            <person name="Schnabl S."/>
            <person name="Hiller R."/>
            <person name="Schmidt W."/>
            <person name="Lecharny A."/>
            <person name="Aubourg S."/>
            <person name="Chefdor F."/>
            <person name="Cooke R."/>
            <person name="Berger C."/>
            <person name="Monfort A."/>
            <person name="Casacuberta E."/>
            <person name="Gibbons T."/>
            <person name="Weber N."/>
            <person name="Vandenbol M."/>
            <person name="Bargues M."/>
            <person name="Terol J."/>
            <person name="Torres A."/>
            <person name="Perez-Perez A."/>
            <person name="Purnelle B."/>
            <person name="Bent E."/>
            <person name="Johnson S."/>
            <person name="Tacon D."/>
            <person name="Jesse T."/>
            <person name="Heijnen L."/>
            <person name="Schwarz S."/>
            <person name="Scholler P."/>
            <person name="Heber S."/>
            <person name="Francs P."/>
            <person name="Bielke C."/>
            <person name="Frishman D."/>
            <person name="Haase D."/>
            <person name="Lemcke K."/>
            <person name="Mewes H.-W."/>
            <person name="Stocker S."/>
            <person name="Zaccaria P."/>
            <person name="Bevan M."/>
            <person name="Wilson R.K."/>
            <person name="de la Bastide M."/>
            <person name="Habermann K."/>
            <person name="Parnell L."/>
            <person name="Dedhia N."/>
            <person name="Gnoj L."/>
            <person name="Schutz K."/>
            <person name="Huang E."/>
            <person name="Spiegel L."/>
            <person name="Sekhon M."/>
            <person name="Murray J."/>
            <person name="Sheet P."/>
            <person name="Cordes M."/>
            <person name="Abu-Threideh J."/>
            <person name="Stoneking T."/>
            <person name="Kalicki J."/>
            <person name="Graves T."/>
            <person name="Harmon G."/>
            <person name="Edwards J."/>
            <person name="Latreille P."/>
            <person name="Courtney L."/>
            <person name="Cloud J."/>
            <person name="Abbott A."/>
            <person name="Scott K."/>
            <person name="Johnson D."/>
            <person name="Minx P."/>
            <person name="Bentley D."/>
            <person name="Fulton B."/>
            <person name="Miller N."/>
            <person name="Greco T."/>
            <person name="Kemp K."/>
            <person name="Kramer J."/>
            <person name="Fulton L."/>
            <person name="Mardis E."/>
            <person name="Dante M."/>
            <person name="Pepin K."/>
            <person name="Hillier L.W."/>
            <person name="Nelson J."/>
            <person name="Spieth J."/>
            <person name="Ryan E."/>
            <person name="Andrews S."/>
            <person name="Geisel C."/>
            <person name="Layman D."/>
            <person name="Du H."/>
            <person name="Ali J."/>
            <person name="Berghoff A."/>
            <person name="Jones K."/>
            <person name="Drone K."/>
            <person name="Cotton M."/>
            <person name="Joshu C."/>
            <person name="Antonoiu B."/>
            <person name="Zidanic M."/>
            <person name="Strong C."/>
            <person name="Sun H."/>
            <person name="Lamar B."/>
            <person name="Yordan C."/>
            <person name="Ma P."/>
            <person name="Zhong J."/>
            <person name="Preston R."/>
            <person name="Vil D."/>
            <person name="Shekher M."/>
            <person name="Matero A."/>
            <person name="Shah R."/>
            <person name="Swaby I.K."/>
            <person name="O'Shaughnessy A."/>
            <person name="Rodriguez M."/>
            <person name="Hoffman J."/>
            <person name="Till S."/>
            <person name="Granat S."/>
            <person name="Shohdy N."/>
            <person name="Hasegawa A."/>
            <person name="Hameed A."/>
            <person name="Lodhi M."/>
            <person name="Johnson A."/>
            <person name="Chen E."/>
            <person name="Marra M.A."/>
            <person name="Martienssen R."/>
            <person name="McCombie W.R."/>
        </authorList>
    </citation>
    <scope>NUCLEOTIDE SEQUENCE [LARGE SCALE GENOMIC DNA]</scope>
    <source>
        <strain>cv. Columbia</strain>
    </source>
</reference>
<reference key="3">
    <citation type="journal article" date="2017" name="Plant J.">
        <title>Araport11: a complete reannotation of the Arabidopsis thaliana reference genome.</title>
        <authorList>
            <person name="Cheng C.Y."/>
            <person name="Krishnakumar V."/>
            <person name="Chan A.P."/>
            <person name="Thibaud-Nissen F."/>
            <person name="Schobel S."/>
            <person name="Town C.D."/>
        </authorList>
    </citation>
    <scope>GENOME REANNOTATION</scope>
    <source>
        <strain>cv. Columbia</strain>
    </source>
</reference>
<reference key="4">
    <citation type="journal article" date="2005" name="Plant Physiol.">
        <title>Genome organization of more than 300 defensin-like genes in Arabidopsis.</title>
        <authorList>
            <person name="Silverstein K.A.T."/>
            <person name="Graham M.A."/>
            <person name="Paape T.D."/>
            <person name="VandenBosch K.A."/>
        </authorList>
    </citation>
    <scope>GENE FAMILY</scope>
</reference>
<sequence>MLRANVVVSLVIFAALMQCMNGKENITPWIYSMKQPVSCNREHSEIGICLSGIDDDIQNDGKCWKFCLMVAKSGGYNADK</sequence>
<feature type="signal peptide" evidence="2">
    <location>
        <begin position="1"/>
        <end position="22"/>
    </location>
</feature>
<feature type="chain" id="PRO_0000379610" description="Putative defensin-like protein 28">
    <location>
        <begin position="23"/>
        <end position="80"/>
    </location>
</feature>
<organism>
    <name type="scientific">Arabidopsis thaliana</name>
    <name type="common">Mouse-ear cress</name>
    <dbReference type="NCBI Taxonomy" id="3702"/>
    <lineage>
        <taxon>Eukaryota</taxon>
        <taxon>Viridiplantae</taxon>
        <taxon>Streptophyta</taxon>
        <taxon>Embryophyta</taxon>
        <taxon>Tracheophyta</taxon>
        <taxon>Spermatophyta</taxon>
        <taxon>Magnoliopsida</taxon>
        <taxon>eudicotyledons</taxon>
        <taxon>Gunneridae</taxon>
        <taxon>Pentapetalae</taxon>
        <taxon>rosids</taxon>
        <taxon>malvids</taxon>
        <taxon>Brassicales</taxon>
        <taxon>Brassicaceae</taxon>
        <taxon>Camelineae</taxon>
        <taxon>Arabidopsis</taxon>
    </lineage>
</organism>
<name>DEF28_ARATH</name>